<name>CPG8_CAEEL</name>
<organism>
    <name type="scientific">Caenorhabditis elegans</name>
    <dbReference type="NCBI Taxonomy" id="6239"/>
    <lineage>
        <taxon>Eukaryota</taxon>
        <taxon>Metazoa</taxon>
        <taxon>Ecdysozoa</taxon>
        <taxon>Nematoda</taxon>
        <taxon>Chromadorea</taxon>
        <taxon>Rhabditida</taxon>
        <taxon>Rhabditina</taxon>
        <taxon>Rhabditomorpha</taxon>
        <taxon>Rhabditoidea</taxon>
        <taxon>Rhabditidae</taxon>
        <taxon>Peloderinae</taxon>
        <taxon>Caenorhabditis</taxon>
    </lineage>
</organism>
<proteinExistence type="evidence at protein level"/>
<keyword id="KW-0025">Alternative splicing</keyword>
<keyword id="KW-0325">Glycoprotein</keyword>
<keyword id="KW-0654">Proteoglycan</keyword>
<keyword id="KW-1185">Reference proteome</keyword>
<keyword id="KW-0732">Signal</keyword>
<feature type="signal peptide" evidence="1">
    <location>
        <begin position="1"/>
        <end position="16"/>
    </location>
</feature>
<feature type="chain" id="PRO_0000320228" description="Chondroitin proteoglycan 8">
    <location>
        <begin position="17"/>
        <end position="115"/>
    </location>
</feature>
<feature type="region of interest" description="Disordered" evidence="2">
    <location>
        <begin position="33"/>
        <end position="96"/>
    </location>
</feature>
<feature type="glycosylation site" description="O-linked (Xyl...) (chondroitin sulfate) serine" evidence="3">
    <location>
        <position position="61"/>
    </location>
</feature>
<feature type="glycosylation site" description="O-linked (Xyl...) (chondroitin sulfate) serine" evidence="3">
    <location>
        <position position="63"/>
    </location>
</feature>
<feature type="glycosylation site" description="O-linked (Xyl...) (chondroitin sulfate) serine" evidence="3">
    <location>
        <position position="84"/>
    </location>
</feature>
<feature type="glycosylation site" description="O-linked (Xyl...) (chondroitin sulfate) serine" evidence="3">
    <location>
        <position position="88"/>
    </location>
</feature>
<feature type="glycosylation site" description="O-linked (Xyl...) (chondroitin sulfate) serine" evidence="3">
    <location>
        <position position="109"/>
    </location>
</feature>
<feature type="splice variant" id="VSP_052686" description="In isoform b." evidence="5">
    <original>DGSGSGESPAEEQLRRVVRDVDEEASGEGSGAAEVTSVPVRFVRSVDAEGSGSGSDE</original>
    <variation>VSFGLSGSQAWPIFQFFSFALKTKKKSKFFRRSGYELRPRP</variation>
    <location>
        <begin position="59"/>
        <end position="115"/>
    </location>
</feature>
<evidence type="ECO:0000255" key="1"/>
<evidence type="ECO:0000256" key="2">
    <source>
        <dbReference type="SAM" id="MobiDB-lite"/>
    </source>
</evidence>
<evidence type="ECO:0000269" key="3">
    <source>
    </source>
</evidence>
<evidence type="ECO:0000269" key="4">
    <source>
    </source>
</evidence>
<evidence type="ECO:0000303" key="5">
    <source>
    </source>
</evidence>
<evidence type="ECO:0000305" key="6"/>
<evidence type="ECO:0000312" key="7">
    <source>
        <dbReference type="EMBL" id="ABC65818.1"/>
    </source>
</evidence>
<evidence type="ECO:0000312" key="8">
    <source>
        <dbReference type="WormBase" id="K03B4.7a"/>
    </source>
</evidence>
<protein>
    <recommendedName>
        <fullName>Chondroitin proteoglycan 8</fullName>
    </recommendedName>
</protein>
<reference evidence="6 7" key="1">
    <citation type="journal article" date="2006" name="J. Cell Biol.">
        <title>Identification of novel chondroitin proteoglycans in Caenorhabditis elegans: embryonic cell division depends on CPG-1 and CPG-2.</title>
        <authorList>
            <person name="Olson S.K."/>
            <person name="Bishop J.R."/>
            <person name="Yates J.R."/>
            <person name="Oegema K."/>
            <person name="Esko J.D."/>
        </authorList>
    </citation>
    <scope>NUCLEOTIDE SEQUENCE [MRNA] (ISOFORM A)</scope>
    <scope>IDENTIFICATION BY MASS SPECTROMETRY</scope>
    <scope>GLYCOSYLATION AT SER-61; SER-63; SER-84; SER-88 AND SER-109</scope>
</reference>
<reference evidence="6" key="2">
    <citation type="journal article" date="1998" name="Science">
        <title>Genome sequence of the nematode C. elegans: a platform for investigating biology.</title>
        <authorList>
            <consortium name="The C. elegans sequencing consortium"/>
        </authorList>
    </citation>
    <scope>NUCLEOTIDE SEQUENCE [LARGE SCALE GENOMIC DNA]</scope>
    <scope>ALTERNATIVE SPLICING</scope>
    <source>
        <strain>Bristol N2</strain>
    </source>
</reference>
<sequence>MRPFILLALLVSVTVAFNIFRDEVVPEEQLLAVRRTTRDASDSSSDSDEKDDAKTTVTDGSGSGESPAEEQLRRVVRDVDEEASGEGSGAAEVTSVPVRFVRSVDAEGSGSGSDE</sequence>
<accession>Q21175</accession>
<accession>Q86NG7</accession>
<dbReference type="EMBL" id="DQ340630">
    <property type="protein sequence ID" value="ABC65818.1"/>
    <property type="molecule type" value="mRNA"/>
</dbReference>
<dbReference type="EMBL" id="FO081359">
    <property type="protein sequence ID" value="CCD71030.1"/>
    <property type="molecule type" value="Genomic_DNA"/>
</dbReference>
<dbReference type="EMBL" id="FO081359">
    <property type="protein sequence ID" value="CCD71031.1"/>
    <property type="molecule type" value="Genomic_DNA"/>
</dbReference>
<dbReference type="PIR" id="T29728">
    <property type="entry name" value="T29728"/>
</dbReference>
<dbReference type="RefSeq" id="NP_504264.1">
    <molecule id="Q21175-1"/>
    <property type="nucleotide sequence ID" value="NM_071863.8"/>
</dbReference>
<dbReference type="RefSeq" id="NP_872155.1">
    <molecule id="Q21175-2"/>
    <property type="nucleotide sequence ID" value="NM_182355.5"/>
</dbReference>
<dbReference type="SMR" id="Q21175"/>
<dbReference type="BioGRID" id="43912">
    <property type="interactions" value="2"/>
</dbReference>
<dbReference type="FunCoup" id="Q21175">
    <property type="interactions" value="212"/>
</dbReference>
<dbReference type="IntAct" id="Q21175">
    <property type="interactions" value="1"/>
</dbReference>
<dbReference type="STRING" id="6239.K03B4.7a.1"/>
<dbReference type="GlyCosmos" id="Q21175">
    <property type="glycosylation" value="5 sites, No reported glycans"/>
</dbReference>
<dbReference type="iPTMnet" id="Q21175"/>
<dbReference type="PaxDb" id="6239-K03B4.7a"/>
<dbReference type="PeptideAtlas" id="Q21175"/>
<dbReference type="EnsemblMetazoa" id="K03B4.7a.1">
    <molecule id="Q21175-1"/>
    <property type="protein sequence ID" value="K03B4.7a.1"/>
    <property type="gene ID" value="WBGene00019357"/>
</dbReference>
<dbReference type="EnsemblMetazoa" id="K03B4.7b.1">
    <molecule id="Q21175-2"/>
    <property type="protein sequence ID" value="K03B4.7b.1"/>
    <property type="gene ID" value="WBGene00019357"/>
</dbReference>
<dbReference type="GeneID" id="178860"/>
<dbReference type="KEGG" id="cel:CELE_K03B4.7"/>
<dbReference type="UCSC" id="K03B4.7a.1">
    <molecule id="Q21175-1"/>
    <property type="organism name" value="c. elegans"/>
</dbReference>
<dbReference type="AGR" id="WB:WBGene00019357"/>
<dbReference type="CTD" id="178860"/>
<dbReference type="WormBase" id="K03B4.7a">
    <molecule id="Q21175-1"/>
    <property type="protein sequence ID" value="CE28581"/>
    <property type="gene ID" value="WBGene00019357"/>
    <property type="gene designation" value="cpg-8"/>
</dbReference>
<dbReference type="WormBase" id="K03B4.7b">
    <molecule id="Q21175-2"/>
    <property type="protein sequence ID" value="CE33133"/>
    <property type="gene ID" value="WBGene00019357"/>
    <property type="gene designation" value="cpg-8"/>
</dbReference>
<dbReference type="eggNOG" id="ENOG502R8AK">
    <property type="taxonomic scope" value="Eukaryota"/>
</dbReference>
<dbReference type="HOGENOM" id="CLU_2199364_0_0_1"/>
<dbReference type="InParanoid" id="Q21175"/>
<dbReference type="OMA" id="YSVHKTE"/>
<dbReference type="OrthoDB" id="5847191at2759"/>
<dbReference type="PRO" id="PR:Q21175"/>
<dbReference type="Proteomes" id="UP000001940">
    <property type="component" value="Chromosome V"/>
</dbReference>
<dbReference type="Bgee" id="WBGene00019357">
    <property type="expression patterns" value="Expressed in embryo and 4 other cell types or tissues"/>
</dbReference>
<comment type="alternative products">
    <event type="alternative splicing"/>
    <isoform>
        <id>Q21175-1</id>
        <name evidence="3">a</name>
        <sequence type="displayed"/>
    </isoform>
    <isoform>
        <id>Q21175-2</id>
        <name evidence="4">b</name>
        <sequence type="described" ref="VSP_052686"/>
    </isoform>
</comment>
<gene>
    <name evidence="8" type="primary">cpg-8</name>
    <name type="ORF">K03B4.7</name>
</gene>